<organism>
    <name type="scientific">Escherichia coli (strain K12)</name>
    <dbReference type="NCBI Taxonomy" id="83333"/>
    <lineage>
        <taxon>Bacteria</taxon>
        <taxon>Pseudomonadati</taxon>
        <taxon>Pseudomonadota</taxon>
        <taxon>Gammaproteobacteria</taxon>
        <taxon>Enterobacterales</taxon>
        <taxon>Enterobacteriaceae</taxon>
        <taxon>Escherichia</taxon>
    </lineage>
</organism>
<gene>
    <name type="primary">qorB</name>
    <name type="synonym">qor2</name>
    <name type="synonym">ytfG</name>
    <name type="ordered locus">b4211</name>
    <name type="ordered locus">JW4169</name>
</gene>
<feature type="chain" id="PRO_0000169825" description="Quinone oxidoreductase 2">
    <location>
        <begin position="1"/>
        <end position="286"/>
    </location>
</feature>
<feature type="binding site" evidence="1">
    <location>
        <begin position="6"/>
        <end position="11"/>
    </location>
    <ligand>
        <name>NADP(+)</name>
        <dbReference type="ChEBI" id="CHEBI:58349"/>
    </ligand>
</feature>
<feature type="binding site" evidence="1">
    <location>
        <position position="33"/>
    </location>
    <ligand>
        <name>NADP(+)</name>
        <dbReference type="ChEBI" id="CHEBI:58349"/>
    </ligand>
</feature>
<feature type="binding site" evidence="1">
    <location>
        <begin position="73"/>
        <end position="75"/>
    </location>
    <ligand>
        <name>NADP(+)</name>
        <dbReference type="ChEBI" id="CHEBI:58349"/>
    </ligand>
</feature>
<feature type="binding site" evidence="1">
    <location>
        <begin position="138"/>
        <end position="143"/>
    </location>
    <ligand>
        <name>NADP(+)</name>
        <dbReference type="ChEBI" id="CHEBI:58349"/>
    </ligand>
</feature>
<feature type="binding site" evidence="1">
    <location>
        <position position="171"/>
    </location>
    <ligand>
        <name>NADP(+)</name>
        <dbReference type="ChEBI" id="CHEBI:58349"/>
    </ligand>
</feature>
<feature type="mutagenesis site" description="3-fold increase in the Km for methyl-1,4-benzoquinone." evidence="1">
    <original>W</original>
    <variation>A</variation>
    <variation>I</variation>
    <location>
        <position position="139"/>
    </location>
</feature>
<feature type="mutagenesis site" description="Almost no change in the Km for methyl-1,4-benzoquinone." evidence="1">
    <original>W</original>
    <variation>F</variation>
    <location>
        <position position="139"/>
    </location>
</feature>
<feature type="mutagenesis site" description="Almost complete loss of catalytic activity." evidence="1">
    <original>Y</original>
    <variation>A</variation>
    <variation>I</variation>
    <location>
        <position position="140"/>
    </location>
</feature>
<feature type="mutagenesis site" description="No change." evidence="1">
    <original>Y</original>
    <variation>F</variation>
    <location>
        <position position="140"/>
    </location>
</feature>
<feature type="mutagenesis site" description="6-fold increase in the Km for methyl-1,4-benzoquinone. No change in affinity for NADPH." evidence="1">
    <original>N</original>
    <variation>A</variation>
    <variation>L</variation>
    <location>
        <position position="143"/>
    </location>
</feature>
<feature type="strand" evidence="3">
    <location>
        <begin position="2"/>
        <end position="6"/>
    </location>
</feature>
<feature type="helix" evidence="3">
    <location>
        <begin position="10"/>
        <end position="19"/>
    </location>
</feature>
<feature type="turn" evidence="3">
    <location>
        <begin position="20"/>
        <end position="22"/>
    </location>
</feature>
<feature type="helix" evidence="3">
    <location>
        <begin position="25"/>
        <end position="27"/>
    </location>
</feature>
<feature type="strand" evidence="3">
    <location>
        <begin position="28"/>
        <end position="33"/>
    </location>
</feature>
<feature type="turn" evidence="3">
    <location>
        <begin position="35"/>
        <end position="37"/>
    </location>
</feature>
<feature type="helix" evidence="3">
    <location>
        <begin position="39"/>
        <end position="43"/>
    </location>
</feature>
<feature type="strand" evidence="3">
    <location>
        <begin position="47"/>
        <end position="50"/>
    </location>
</feature>
<feature type="helix" evidence="3">
    <location>
        <begin position="56"/>
        <end position="62"/>
    </location>
</feature>
<feature type="turn" evidence="3">
    <location>
        <begin position="63"/>
        <end position="65"/>
    </location>
</feature>
<feature type="strand" evidence="3">
    <location>
        <begin position="67"/>
        <end position="71"/>
    </location>
</feature>
<feature type="helix" evidence="3">
    <location>
        <begin position="83"/>
        <end position="94"/>
    </location>
</feature>
<feature type="strand" evidence="3">
    <location>
        <begin position="98"/>
        <end position="104"/>
    </location>
</feature>
<feature type="turn" evidence="3">
    <location>
        <begin position="105"/>
        <end position="109"/>
    </location>
</feature>
<feature type="helix" evidence="3">
    <location>
        <begin position="115"/>
        <end position="128"/>
    </location>
</feature>
<feature type="strand" evidence="3">
    <location>
        <begin position="130"/>
        <end position="137"/>
    </location>
</feature>
<feature type="helix" evidence="3">
    <location>
        <begin position="141"/>
        <end position="145"/>
    </location>
</feature>
<feature type="helix" evidence="3">
    <location>
        <begin position="148"/>
        <end position="154"/>
    </location>
</feature>
<feature type="strand" evidence="3">
    <location>
        <begin position="156"/>
        <end position="160"/>
    </location>
</feature>
<feature type="helix" evidence="3">
    <location>
        <begin position="171"/>
        <end position="183"/>
    </location>
</feature>
<feature type="strand" evidence="3">
    <location>
        <begin position="184"/>
        <end position="186"/>
    </location>
</feature>
<feature type="strand" evidence="3">
    <location>
        <begin position="191"/>
        <end position="194"/>
    </location>
</feature>
<feature type="helix" evidence="3">
    <location>
        <begin position="202"/>
        <end position="213"/>
    </location>
</feature>
<feature type="strand" evidence="3">
    <location>
        <begin position="218"/>
        <end position="221"/>
    </location>
</feature>
<feature type="helix" evidence="3">
    <location>
        <begin position="224"/>
        <end position="231"/>
    </location>
</feature>
<feature type="helix" evidence="3">
    <location>
        <begin position="238"/>
        <end position="252"/>
    </location>
</feature>
<feature type="turn" evidence="3">
    <location>
        <begin position="253"/>
        <end position="256"/>
    </location>
</feature>
<feature type="helix" evidence="3">
    <location>
        <begin position="262"/>
        <end position="267"/>
    </location>
</feature>
<feature type="helix" evidence="3">
    <location>
        <begin position="274"/>
        <end position="279"/>
    </location>
</feature>
<feature type="helix" evidence="3">
    <location>
        <begin position="280"/>
        <end position="282"/>
    </location>
</feature>
<dbReference type="EC" id="1.6.5.2"/>
<dbReference type="EMBL" id="U14003">
    <property type="protein sequence ID" value="AAA97107.1"/>
    <property type="molecule type" value="Genomic_DNA"/>
</dbReference>
<dbReference type="EMBL" id="U00096">
    <property type="protein sequence ID" value="AAC77168.1"/>
    <property type="molecule type" value="Genomic_DNA"/>
</dbReference>
<dbReference type="EMBL" id="AP009048">
    <property type="protein sequence ID" value="BAE78212.1"/>
    <property type="molecule type" value="Genomic_DNA"/>
</dbReference>
<dbReference type="PIR" id="S56436">
    <property type="entry name" value="S56436"/>
</dbReference>
<dbReference type="RefSeq" id="NP_418632.1">
    <property type="nucleotide sequence ID" value="NC_000913.3"/>
</dbReference>
<dbReference type="RefSeq" id="WP_000560561.1">
    <property type="nucleotide sequence ID" value="NZ_LN832404.1"/>
</dbReference>
<dbReference type="PDB" id="2ZCU">
    <property type="method" value="X-ray"/>
    <property type="resolution" value="1.80 A"/>
    <property type="chains" value="A=1-286"/>
</dbReference>
<dbReference type="PDB" id="2ZCV">
    <property type="method" value="X-ray"/>
    <property type="resolution" value="2.30 A"/>
    <property type="chains" value="A=1-286"/>
</dbReference>
<dbReference type="PDBsum" id="2ZCU"/>
<dbReference type="PDBsum" id="2ZCV"/>
<dbReference type="SMR" id="P39315"/>
<dbReference type="BioGRID" id="4263443">
    <property type="interactions" value="16"/>
</dbReference>
<dbReference type="DIP" id="DIP-12935N"/>
<dbReference type="FunCoup" id="P39315">
    <property type="interactions" value="730"/>
</dbReference>
<dbReference type="IntAct" id="P39315">
    <property type="interactions" value="4"/>
</dbReference>
<dbReference type="STRING" id="511145.b4211"/>
<dbReference type="jPOST" id="P39315"/>
<dbReference type="PaxDb" id="511145-b4211"/>
<dbReference type="DNASU" id="948731"/>
<dbReference type="EnsemblBacteria" id="AAC77168">
    <property type="protein sequence ID" value="AAC77168"/>
    <property type="gene ID" value="b4211"/>
</dbReference>
<dbReference type="GeneID" id="948731"/>
<dbReference type="KEGG" id="ecj:JW4169"/>
<dbReference type="KEGG" id="eco:b4211"/>
<dbReference type="KEGG" id="ecoc:C3026_22745"/>
<dbReference type="PATRIC" id="fig|1411691.4.peg.2490"/>
<dbReference type="EchoBASE" id="EB2400"/>
<dbReference type="eggNOG" id="COG0702">
    <property type="taxonomic scope" value="Bacteria"/>
</dbReference>
<dbReference type="HOGENOM" id="CLU_007383_10_4_6"/>
<dbReference type="InParanoid" id="P39315"/>
<dbReference type="OMA" id="NGWYHEN"/>
<dbReference type="OrthoDB" id="5510591at2"/>
<dbReference type="PhylomeDB" id="P39315"/>
<dbReference type="BioCyc" id="EcoCyc:G7868-MONOMER"/>
<dbReference type="BioCyc" id="MetaCyc:G7868-MONOMER"/>
<dbReference type="BRENDA" id="1.6.5.2">
    <property type="organism ID" value="2026"/>
</dbReference>
<dbReference type="SABIO-RK" id="P39315"/>
<dbReference type="EvolutionaryTrace" id="P39315"/>
<dbReference type="PRO" id="PR:P39315"/>
<dbReference type="Proteomes" id="UP000000625">
    <property type="component" value="Chromosome"/>
</dbReference>
<dbReference type="GO" id="GO:0005829">
    <property type="term" value="C:cytosol"/>
    <property type="evidence" value="ECO:0000314"/>
    <property type="project" value="EcoCyc"/>
</dbReference>
<dbReference type="GO" id="GO:0050136">
    <property type="term" value="F:NADH:ubiquinone reductase (non-electrogenic) activity"/>
    <property type="evidence" value="ECO:0007669"/>
    <property type="project" value="RHEA"/>
</dbReference>
<dbReference type="GO" id="GO:0008753">
    <property type="term" value="F:NADPH dehydrogenase (quinone) activity"/>
    <property type="evidence" value="ECO:0007669"/>
    <property type="project" value="RHEA"/>
</dbReference>
<dbReference type="GO" id="GO:0016655">
    <property type="term" value="F:oxidoreductase activity, acting on NAD(P)H, quinone or similar compound as acceptor"/>
    <property type="evidence" value="ECO:0000314"/>
    <property type="project" value="EcoCyc"/>
</dbReference>
<dbReference type="CDD" id="cd05269">
    <property type="entry name" value="TMR_SDR_a"/>
    <property type="match status" value="1"/>
</dbReference>
<dbReference type="FunFam" id="3.40.50.720:FF:000465">
    <property type="entry name" value="Quinone oxidoreductase 2"/>
    <property type="match status" value="1"/>
</dbReference>
<dbReference type="Gene3D" id="3.40.50.720">
    <property type="entry name" value="NAD(P)-binding Rossmann-like Domain"/>
    <property type="match status" value="1"/>
</dbReference>
<dbReference type="Gene3D" id="3.90.25.10">
    <property type="entry name" value="UDP-galactose 4-epimerase, domain 1"/>
    <property type="match status" value="1"/>
</dbReference>
<dbReference type="InterPro" id="IPR036291">
    <property type="entry name" value="NAD(P)-bd_dom_sf"/>
</dbReference>
<dbReference type="InterPro" id="IPR008030">
    <property type="entry name" value="NmrA-like"/>
</dbReference>
<dbReference type="InterPro" id="IPR052718">
    <property type="entry name" value="NmrA-type_oxidoreductase"/>
</dbReference>
<dbReference type="PANTHER" id="PTHR47129:SF1">
    <property type="entry name" value="NMRA-LIKE DOMAIN-CONTAINING PROTEIN"/>
    <property type="match status" value="1"/>
</dbReference>
<dbReference type="PANTHER" id="PTHR47129">
    <property type="entry name" value="QUINONE OXIDOREDUCTASE 2"/>
    <property type="match status" value="1"/>
</dbReference>
<dbReference type="Pfam" id="PF05368">
    <property type="entry name" value="NmrA"/>
    <property type="match status" value="1"/>
</dbReference>
<dbReference type="SUPFAM" id="SSF51735">
    <property type="entry name" value="NAD(P)-binding Rossmann-fold domains"/>
    <property type="match status" value="1"/>
</dbReference>
<reference key="1">
    <citation type="journal article" date="1995" name="Nucleic Acids Res.">
        <title>Analysis of the Escherichia coli genome VI: DNA sequence of the region from 92.8 through 100 minutes.</title>
        <authorList>
            <person name="Burland V.D."/>
            <person name="Plunkett G. III"/>
            <person name="Sofia H.J."/>
            <person name="Daniels D.L."/>
            <person name="Blattner F.R."/>
        </authorList>
    </citation>
    <scope>NUCLEOTIDE SEQUENCE [LARGE SCALE GENOMIC DNA]</scope>
    <source>
        <strain>K12 / MG1655 / ATCC 47076</strain>
    </source>
</reference>
<reference key="2">
    <citation type="journal article" date="1997" name="Science">
        <title>The complete genome sequence of Escherichia coli K-12.</title>
        <authorList>
            <person name="Blattner F.R."/>
            <person name="Plunkett G. III"/>
            <person name="Bloch C.A."/>
            <person name="Perna N.T."/>
            <person name="Burland V."/>
            <person name="Riley M."/>
            <person name="Collado-Vides J."/>
            <person name="Glasner J.D."/>
            <person name="Rode C.K."/>
            <person name="Mayhew G.F."/>
            <person name="Gregor J."/>
            <person name="Davis N.W."/>
            <person name="Kirkpatrick H.A."/>
            <person name="Goeden M.A."/>
            <person name="Rose D.J."/>
            <person name="Mau B."/>
            <person name="Shao Y."/>
        </authorList>
    </citation>
    <scope>NUCLEOTIDE SEQUENCE [LARGE SCALE GENOMIC DNA]</scope>
    <source>
        <strain>K12 / MG1655 / ATCC 47076</strain>
    </source>
</reference>
<reference key="3">
    <citation type="journal article" date="2006" name="Mol. Syst. Biol.">
        <title>Highly accurate genome sequences of Escherichia coli K-12 strains MG1655 and W3110.</title>
        <authorList>
            <person name="Hayashi K."/>
            <person name="Morooka N."/>
            <person name="Yamamoto Y."/>
            <person name="Fujita K."/>
            <person name="Isono K."/>
            <person name="Choi S."/>
            <person name="Ohtsubo E."/>
            <person name="Baba T."/>
            <person name="Wanner B.L."/>
            <person name="Mori H."/>
            <person name="Horiuchi T."/>
        </authorList>
    </citation>
    <scope>NUCLEOTIDE SEQUENCE [LARGE SCALE GENOMIC DNA]</scope>
    <source>
        <strain>K12 / W3110 / ATCC 27325 / DSM 5911</strain>
    </source>
</reference>
<reference key="4">
    <citation type="journal article" date="2008" name="J. Mol. Biol.">
        <title>Crystal structure of a new type of NADPH-dependent quinone oxidoreductase (QOR2) from Escherichia coli.</title>
        <authorList>
            <person name="Kim I.K."/>
            <person name="Yim H.S."/>
            <person name="Kim M.K."/>
            <person name="Kim D.W."/>
            <person name="Kim Y.M."/>
            <person name="Cha S.S."/>
            <person name="Kang S.O."/>
        </authorList>
    </citation>
    <scope>X-RAY CRYSTALLOGRAPHY (1.8 ANGSTROMS) IN COMPLEX WITH NADP</scope>
    <scope>CATALYTIC ACTIVITY</scope>
    <scope>SUBUNIT</scope>
    <scope>MUTAGENESIS OF TRP-139; TYR-140 AND ASN-143</scope>
    <scope>BIOPHYSICOCHEMICAL PROPERTIES</scope>
    <scope>FUNCTION</scope>
</reference>
<proteinExistence type="evidence at protein level"/>
<name>QOR2_ECOLI</name>
<keyword id="KW-0002">3D-structure</keyword>
<keyword id="KW-0521">NADP</keyword>
<keyword id="KW-0560">Oxidoreductase</keyword>
<keyword id="KW-1185">Reference proteome</keyword>
<sequence>MIAITGATGQLGHYVIESLMKTVPASQIVAIVRNPAKAQALAAQGITVRQADYGDEAALTSALQGVEKLLLISSSEVGQRAPQHRNVINAAKAAGVKFIAYTSLLHADTSPLGLADEHIETEKMLADSGIVYTLLRNGWYSENYLASAPAALEHGVFIGAAGDGKIASATRADYAAAAARVISEAGHEGKVYELAGDSAWTLTQLAAELTKQSGKQVTYQNLSEADFAAALKSVGLPDGLADMLADSDVGASKGGLFDDSKTLSKLIGHPTTTLAESVSHLFNVNN</sequence>
<accession>P39315</accession>
<accession>Q2M694</accession>
<evidence type="ECO:0000269" key="1">
    <source>
    </source>
</evidence>
<evidence type="ECO:0000305" key="2"/>
<evidence type="ECO:0007829" key="3">
    <source>
        <dbReference type="PDB" id="2ZCU"/>
    </source>
</evidence>
<protein>
    <recommendedName>
        <fullName>Quinone oxidoreductase 2</fullName>
        <ecNumber>1.6.5.2</ecNumber>
    </recommendedName>
</protein>
<comment type="function">
    <text evidence="1">Quinone oxidoreductase that may play some additional role beyond quinone reduction. Potential redox sensor protein. Overexpression induces retardation of growth.</text>
</comment>
<comment type="catalytic activity">
    <reaction evidence="1">
        <text>a quinone + NADH + H(+) = a quinol + NAD(+)</text>
        <dbReference type="Rhea" id="RHEA:46160"/>
        <dbReference type="ChEBI" id="CHEBI:15378"/>
        <dbReference type="ChEBI" id="CHEBI:24646"/>
        <dbReference type="ChEBI" id="CHEBI:57540"/>
        <dbReference type="ChEBI" id="CHEBI:57945"/>
        <dbReference type="ChEBI" id="CHEBI:132124"/>
        <dbReference type="EC" id="1.6.5.2"/>
    </reaction>
</comment>
<comment type="catalytic activity">
    <reaction evidence="1">
        <text>a quinone + NADPH + H(+) = a quinol + NADP(+)</text>
        <dbReference type="Rhea" id="RHEA:46164"/>
        <dbReference type="ChEBI" id="CHEBI:15378"/>
        <dbReference type="ChEBI" id="CHEBI:24646"/>
        <dbReference type="ChEBI" id="CHEBI:57783"/>
        <dbReference type="ChEBI" id="CHEBI:58349"/>
        <dbReference type="ChEBI" id="CHEBI:132124"/>
        <dbReference type="EC" id="1.6.5.2"/>
    </reaction>
</comment>
<comment type="biophysicochemical properties">
    <kinetics>
        <KM evidence="1">65.6 uM for methyl-1,4-benzoquinone (MBQ)</KM>
        <KM evidence="1">18 uM for NADPH</KM>
    </kinetics>
</comment>
<comment type="subunit">
    <text evidence="1">Monomer.</text>
</comment>
<comment type="similarity">
    <text evidence="2">Belongs to the NmrA-type oxidoreductase family.</text>
</comment>